<feature type="chain" id="PRO_0000200686" description="Protein FixC">
    <location>
        <begin position="1"/>
        <end position="435"/>
    </location>
</feature>
<comment type="function">
    <text>Could be required for the formation of a functional nitrogenase Fe protein. Probably accepts electrons from FixA/FixB and reduces a quinone.</text>
</comment>
<comment type="cofactor">
    <cofactor evidence="1">
        <name>FAD</name>
        <dbReference type="ChEBI" id="CHEBI:57692"/>
    </cofactor>
</comment>
<comment type="similarity">
    <text evidence="1">Belongs to the ETF-QO/FixC family.</text>
</comment>
<dbReference type="EMBL" id="U32228">
    <property type="protein sequence ID" value="AAB00904.1"/>
    <property type="molecule type" value="Genomic_DNA"/>
</dbReference>
<dbReference type="EMBL" id="AH010242">
    <property type="protein sequence ID" value="AAG60758.1"/>
    <property type="molecule type" value="Genomic_DNA"/>
</dbReference>
<dbReference type="EMBL" id="BA000040">
    <property type="protein sequence ID" value="BAC47039.1"/>
    <property type="molecule type" value="Genomic_DNA"/>
</dbReference>
<dbReference type="EMBL" id="X13144">
    <property type="protein sequence ID" value="CAA31539.1"/>
    <property type="molecule type" value="Genomic_DNA"/>
</dbReference>
<dbReference type="PIR" id="S04184">
    <property type="entry name" value="S04184"/>
</dbReference>
<dbReference type="RefSeq" id="NP_768414.1">
    <property type="nucleotide sequence ID" value="NC_004463.1"/>
</dbReference>
<dbReference type="RefSeq" id="WP_011084583.1">
    <property type="nucleotide sequence ID" value="NZ_CP011360.1"/>
</dbReference>
<dbReference type="SMR" id="P10331"/>
<dbReference type="FunCoup" id="P10331">
    <property type="interactions" value="749"/>
</dbReference>
<dbReference type="STRING" id="224911.AAV28_05795"/>
<dbReference type="EnsemblBacteria" id="BAC47039">
    <property type="protein sequence ID" value="BAC47039"/>
    <property type="gene ID" value="BAC47039"/>
</dbReference>
<dbReference type="KEGG" id="bja:blr1774"/>
<dbReference type="PATRIC" id="fig|224911.44.peg.1242"/>
<dbReference type="eggNOG" id="COG0644">
    <property type="taxonomic scope" value="Bacteria"/>
</dbReference>
<dbReference type="HOGENOM" id="CLU_050977_0_0_5"/>
<dbReference type="InParanoid" id="P10331"/>
<dbReference type="OrthoDB" id="417034at2"/>
<dbReference type="PhylomeDB" id="P10331"/>
<dbReference type="Proteomes" id="UP000002526">
    <property type="component" value="Chromosome"/>
</dbReference>
<dbReference type="GO" id="GO:0016491">
    <property type="term" value="F:oxidoreductase activity"/>
    <property type="evidence" value="ECO:0007669"/>
    <property type="project" value="UniProtKB-KW"/>
</dbReference>
<dbReference type="GO" id="GO:0009399">
    <property type="term" value="P:nitrogen fixation"/>
    <property type="evidence" value="ECO:0007669"/>
    <property type="project" value="UniProtKB-KW"/>
</dbReference>
<dbReference type="Gene3D" id="3.50.50.60">
    <property type="entry name" value="FAD/NAD(P)-binding domain"/>
    <property type="match status" value="1"/>
</dbReference>
<dbReference type="InterPro" id="IPR036188">
    <property type="entry name" value="FAD/NAD-bd_sf"/>
</dbReference>
<dbReference type="InterPro" id="IPR039651">
    <property type="entry name" value="FixC-like"/>
</dbReference>
<dbReference type="PANTHER" id="PTHR43624">
    <property type="entry name" value="ELECTRON TRANSFER FLAVOPROTEIN-QUINONE OXIDOREDUCTASE YDIS-RELATED"/>
    <property type="match status" value="1"/>
</dbReference>
<dbReference type="PANTHER" id="PTHR43624:SF2">
    <property type="entry name" value="ELECTRON TRANSFER FLAVOPROTEIN-QUINONE OXIDOREDUCTASE YDIS-RELATED"/>
    <property type="match status" value="1"/>
</dbReference>
<dbReference type="Pfam" id="PF12831">
    <property type="entry name" value="FAD_oxidored"/>
    <property type="match status" value="1"/>
</dbReference>
<dbReference type="SUPFAM" id="SSF54373">
    <property type="entry name" value="FAD-linked reductases, C-terminal domain"/>
    <property type="match status" value="1"/>
</dbReference>
<dbReference type="SUPFAM" id="SSF51905">
    <property type="entry name" value="FAD/NAD(P)-binding domain"/>
    <property type="match status" value="1"/>
</dbReference>
<gene>
    <name type="primary">fixC</name>
    <name type="ordered locus">blr1774</name>
</gene>
<reference key="1">
    <citation type="journal article" date="1996" name="Arch. Microbiol.">
        <title>Bradyrhizobium japonicum possesses two discrete sets of electron transfer flavoprotein genes: fixA, fixB and etfS, etfL.</title>
        <authorList>
            <person name="Weidenhaupt M."/>
            <person name="Rossi P."/>
            <person name="Beck C."/>
            <person name="Fischer H.-M."/>
            <person name="Hennecke H."/>
        </authorList>
    </citation>
    <scope>NUCLEOTIDE SEQUENCE [GENOMIC DNA]</scope>
    <source>
        <strain>USDA 3I1b110</strain>
    </source>
</reference>
<reference key="2">
    <citation type="journal article" date="2001" name="J. Bacteriol.">
        <title>Potential symbiosis-specific genes uncovered by sequencing a 410-kb DNA region of the Bradyrhizobium japonicum chromosome.</title>
        <authorList>
            <person name="Goettfert M."/>
            <person name="Roethlisberger S."/>
            <person name="Kuendig C."/>
            <person name="Beck C."/>
            <person name="Marty R."/>
            <person name="Hennecke H."/>
        </authorList>
    </citation>
    <scope>NUCLEOTIDE SEQUENCE [GENOMIC DNA]</scope>
    <source>
        <strain>USDA 110spc4</strain>
    </source>
</reference>
<reference key="3">
    <citation type="journal article" date="2002" name="DNA Res.">
        <title>Complete genomic sequence of nitrogen-fixing symbiotic bacterium Bradyrhizobium japonicum USDA110.</title>
        <authorList>
            <person name="Kaneko T."/>
            <person name="Nakamura Y."/>
            <person name="Sato S."/>
            <person name="Minamisawa K."/>
            <person name="Uchiumi T."/>
            <person name="Sasamoto S."/>
            <person name="Watanabe A."/>
            <person name="Idesawa K."/>
            <person name="Iriguchi M."/>
            <person name="Kawashima K."/>
            <person name="Kohara M."/>
            <person name="Matsumoto M."/>
            <person name="Shimpo S."/>
            <person name="Tsuruoka H."/>
            <person name="Wada T."/>
            <person name="Yamada M."/>
            <person name="Tabata S."/>
        </authorList>
    </citation>
    <scope>NUCLEOTIDE SEQUENCE [LARGE SCALE GENOMIC DNA]</scope>
    <source>
        <strain>JCM 10833 / BCRC 13528 / IAM 13628 / NBRC 14792 / USDA 110</strain>
    </source>
</reference>
<reference key="4">
    <citation type="journal article" date="1989" name="Mol. Microbiol.">
        <title>The Bradyrhizobium japonicum fixBCX operon: identification of fixX and of a 5' mRNA region affecting the level of the fixBCX transcript.</title>
        <authorList>
            <person name="Gubler M."/>
            <person name="Zurcher T."/>
            <person name="Hennecke H."/>
        </authorList>
    </citation>
    <scope>NUCLEOTIDE SEQUENCE [GENOMIC DNA] OF 400-435</scope>
    <source>
        <strain>USDA 110spc4</strain>
    </source>
</reference>
<sequence>MIEERFDAIVVGAGMAGNAAALTMAKQGMKVLQLERGEYPGSKNVQGAILYADMMEKLIPEFREEAPLERHLIEQRFWMMDDRSHVGMHYRSEDFNEQRPNRYTIIRAQFDKWFSSKVREAGAIVLCETTVTELAQDDRNRVVGVRTDRRDGEIHADVVVLAEGVNGLLGTRAGLRARPAPDNVALAVKEMHFLPRETIEARFNLKGDEGVVIEAAGTISRGMTGMGFIYANKECISLGIGCLVADFQRTGQTPYGLLDEFKRHPSVAPLIAGSEVKEYSAHLIPEGGYKSIPQLYGEGWVVVGDAAQLNNAVHREGSNLAMTSGRIAAEAIGLVKSRGEPMSATNLSIYKKMLDDSFVIKDLKKYKDLPPLMHTHSENFFLTYPQLISKAMQNFVRVDGTPKVEKEKASLKSFVKTRSWSGLVGDAYRFARAWR</sequence>
<proteinExistence type="inferred from homology"/>
<name>FIXC_BRADU</name>
<protein>
    <recommendedName>
        <fullName>Protein FixC</fullName>
    </recommendedName>
</protein>
<accession>P10331</accession>
<keyword id="KW-0274">FAD</keyword>
<keyword id="KW-0285">Flavoprotein</keyword>
<keyword id="KW-0535">Nitrogen fixation</keyword>
<keyword id="KW-0560">Oxidoreductase</keyword>
<keyword id="KW-1185">Reference proteome</keyword>
<organism>
    <name type="scientific">Bradyrhizobium diazoefficiens (strain JCM 10833 / BCRC 13528 / IAM 13628 / NBRC 14792 / USDA 110)</name>
    <dbReference type="NCBI Taxonomy" id="224911"/>
    <lineage>
        <taxon>Bacteria</taxon>
        <taxon>Pseudomonadati</taxon>
        <taxon>Pseudomonadota</taxon>
        <taxon>Alphaproteobacteria</taxon>
        <taxon>Hyphomicrobiales</taxon>
        <taxon>Nitrobacteraceae</taxon>
        <taxon>Bradyrhizobium</taxon>
    </lineage>
</organism>
<evidence type="ECO:0000305" key="1"/>